<keyword id="KW-0244">Early protein</keyword>
<keyword id="KW-1035">Host cytoplasm</keyword>
<keyword id="KW-1185">Reference proteome</keyword>
<feature type="chain" id="PRO_0000132874" description="Protein Early 65 kDa">
    <location>
        <begin position="1"/>
        <end position="553"/>
    </location>
</feature>
<dbReference type="EMBL" id="X73577">
    <property type="protein sequence ID" value="CAA51979.1"/>
    <property type="molecule type" value="mRNA"/>
</dbReference>
<dbReference type="EMBL" id="L22858">
    <property type="protein sequence ID" value="AAA66735.1"/>
    <property type="molecule type" value="Genomic_DNA"/>
</dbReference>
<dbReference type="PIR" id="B72863">
    <property type="entry name" value="B72863"/>
</dbReference>
<dbReference type="KEGG" id="vg:1403938"/>
<dbReference type="OrthoDB" id="9432at10239"/>
<dbReference type="Proteomes" id="UP000008292">
    <property type="component" value="Segment"/>
</dbReference>
<dbReference type="GO" id="GO:0030430">
    <property type="term" value="C:host cell cytoplasm"/>
    <property type="evidence" value="ECO:0007669"/>
    <property type="project" value="UniProtKB-SubCell"/>
</dbReference>
<dbReference type="Gene3D" id="3.30.470.30">
    <property type="entry name" value="DNA ligase/mRNA capping enzyme"/>
    <property type="match status" value="1"/>
</dbReference>
<dbReference type="InterPro" id="IPR021122">
    <property type="entry name" value="RNA_ligase_dom_REL/Rnl2"/>
</dbReference>
<dbReference type="Pfam" id="PF09414">
    <property type="entry name" value="RNA_ligase"/>
    <property type="match status" value="1"/>
</dbReference>
<dbReference type="SUPFAM" id="SSF56091">
    <property type="entry name" value="DNA ligase/mRNA capping enzyme, catalytic domain"/>
    <property type="match status" value="1"/>
</dbReference>
<comment type="function">
    <text evidence="1">May participate in the recruitment of G-actin to the host nucleus.</text>
</comment>
<comment type="subcellular location">
    <subcellularLocation>
        <location evidence="2">Host cytoplasm</location>
    </subcellularLocation>
</comment>
<sequence length="553" mass="65577">MVYICIDTGSHAKGYAVESSDTDYHIYTKCDRETFEKFIDNKELLKNRHAKDESGNDVKYVDLYTGLIGILTGKSPELSMFSKREDFKDKYGIENLQLYEFVTKLMTVSMVKIIYTLMRYKILNNAKGLLQLMFNYVYVEYYLDYKRAPKSTKILNMLFNVGDEIKITMDKNNQLVVNDLNVLDLNKNNGGYKIDETLTLFVKNVKLLKLYVKLMQRGEYQQEWTEYFQQWKQQLQDRLHHVPEPPERTDIRHNIVMYALNERGPVMPEDENKIVYQIYPSVSHLDQGKKGTLADKEIIVQEKLDGCNFRIICNQNKITYGSRNTYRPDGNFMNYYRIRKDLETCMRSLQARFNDGFIVYGELMGWKDDAKTTPINVINYVDQKESLKYYAYEIQLYGGEFVPFVEAQELLTNVGFNTIPCHKYLYNDFVERLNFKSLMFPQSPLEGFIIRCGNLIYKLKSDYKDLNKLKIEKGPFEWLTCDYIKSNCDAIDKSDMMKILIFCYNMCKVKNYNEKLLFNKVFNLFRQQFNLNHNDYKNLYKQYVNMCKCTEYK</sequence>
<protein>
    <recommendedName>
        <fullName>Protein Early 65 kDa</fullName>
    </recommendedName>
</protein>
<reference key="1">
    <citation type="journal article" date="1993" name="J. Virol.">
        <title>Sequence and temporal appearance of the early transcribed baculovirus gene HE65.</title>
        <authorList>
            <person name="Becker D."/>
            <person name="Knebel-Moersdorf D."/>
        </authorList>
    </citation>
    <scope>NUCLEOTIDE SEQUENCE</scope>
    <source>
        <strain>E</strain>
    </source>
</reference>
<reference key="2">
    <citation type="journal article" date="1994" name="Virology">
        <title>The complete DNA sequence of Autographa californica nuclear polyhedrosis virus.</title>
        <authorList>
            <person name="Ayres M.D."/>
            <person name="Howard S.C."/>
            <person name="Kuzio J."/>
            <person name="Lopez-Ferber M."/>
            <person name="Possee R.D."/>
        </authorList>
    </citation>
    <scope>NUCLEOTIDE SEQUENCE [LARGE SCALE GENOMIC DNA]</scope>
    <source>
        <strain>C6</strain>
    </source>
</reference>
<reference key="3">
    <citation type="journal article" date="2002" name="J. Virol.">
        <title>Identification of six Autographa californica multicapsid nucleopolyhedrovirus early genes that mediate nuclear localization of G-actin.</title>
        <authorList>
            <person name="Ohkawa T."/>
            <person name="Rowe A.R."/>
            <person name="Volkman L.E."/>
        </authorList>
    </citation>
    <scope>FUNCTION</scope>
</reference>
<reference key="4">
    <citation type="journal article" date="2012" name="J. Gen. Virol.">
        <title>Nuclear localization of actin requires AC102 in Autographa californica multiple nucleopolyhedrovirus-infected cells.</title>
        <authorList>
            <person name="Gandhi K.M."/>
            <person name="Ohkawa T."/>
            <person name="Welch M.D."/>
            <person name="Volkman L.E."/>
        </authorList>
    </citation>
    <scope>SUBCELLULAR LOCATION</scope>
</reference>
<organism>
    <name type="scientific">Autographa californica nuclear polyhedrosis virus</name>
    <name type="common">AcMNPV</name>
    <dbReference type="NCBI Taxonomy" id="46015"/>
    <lineage>
        <taxon>Viruses</taxon>
        <taxon>Viruses incertae sedis</taxon>
        <taxon>Naldaviricetes</taxon>
        <taxon>Lefavirales</taxon>
        <taxon>Baculoviridae</taxon>
        <taxon>Alphabaculovirus</taxon>
        <taxon>Alphabaculovirus aucalifornicae</taxon>
    </lineage>
</organism>
<accession>Q08539</accession>
<organismHost>
    <name type="scientific">Lepidoptera</name>
    <name type="common">butterflies and moths</name>
    <dbReference type="NCBI Taxonomy" id="7088"/>
</organismHost>
<name>HE65_NPVAC</name>
<evidence type="ECO:0000269" key="1">
    <source>
    </source>
</evidence>
<evidence type="ECO:0000269" key="2">
    <source>
    </source>
</evidence>
<gene>
    <name type="primary">HE65</name>
</gene>
<proteinExistence type="evidence at transcript level"/>